<evidence type="ECO:0000250" key="1"/>
<evidence type="ECO:0000250" key="2">
    <source>
        <dbReference type="UniProtKB" id="P00984"/>
    </source>
</evidence>
<evidence type="ECO:0000255" key="3">
    <source>
        <dbReference type="PROSITE-ProRule" id="PRU00031"/>
    </source>
</evidence>
<evidence type="ECO:0000269" key="4">
    <source>
    </source>
</evidence>
<evidence type="ECO:0000303" key="5">
    <source>
    </source>
</evidence>
<evidence type="ECO:0000305" key="6"/>
<evidence type="ECO:0000305" key="7">
    <source>
    </source>
</evidence>
<reference key="1">
    <citation type="journal article" date="2002" name="Toxicon">
        <title>Primary structures of four trypsin inhibitor E homologs from venom of Dendroaspis angusticeps: structure-function comparisons with other dendrotoxin homologs.</title>
        <authorList>
            <person name="Sigle R."/>
            <person name="Hackett M."/>
            <person name="Aird S.D."/>
        </authorList>
    </citation>
    <scope>PROTEIN SEQUENCE</scope>
    <scope>MASS SPECTROMETRY</scope>
    <scope>SUBCELLULAR LOCATION</scope>
    <source>
        <tissue>Venom</tissue>
    </source>
</reference>
<protein>
    <recommendedName>
        <fullName evidence="5 6">Kunitz-type serine protease inhibitor long epsilon-dendrotoxin Arg55</fullName>
    </recommendedName>
    <component>
        <recommendedName>
            <fullName evidence="5 6">Kunitz-type serine protease inhibitor short epsilon-dendrotoxin Arg55</fullName>
        </recommendedName>
    </component>
</protein>
<dbReference type="PIR" id="A59399">
    <property type="entry name" value="A59399"/>
</dbReference>
<dbReference type="BMRB" id="Q7LZS8"/>
<dbReference type="SMR" id="Q7LZS8"/>
<dbReference type="MEROPS" id="I02.056"/>
<dbReference type="GO" id="GO:0005576">
    <property type="term" value="C:extracellular region"/>
    <property type="evidence" value="ECO:0007669"/>
    <property type="project" value="UniProtKB-SubCell"/>
</dbReference>
<dbReference type="GO" id="GO:0004867">
    <property type="term" value="F:serine-type endopeptidase inhibitor activity"/>
    <property type="evidence" value="ECO:0007669"/>
    <property type="project" value="UniProtKB-KW"/>
</dbReference>
<dbReference type="CDD" id="cd22595">
    <property type="entry name" value="Kunitz_dendrotoxin"/>
    <property type="match status" value="1"/>
</dbReference>
<dbReference type="FunFam" id="4.10.410.10:FF:000021">
    <property type="entry name" value="Serine protease inhibitor, putative"/>
    <property type="match status" value="1"/>
</dbReference>
<dbReference type="Gene3D" id="4.10.410.10">
    <property type="entry name" value="Pancreatic trypsin inhibitor Kunitz domain"/>
    <property type="match status" value="1"/>
</dbReference>
<dbReference type="InterPro" id="IPR002223">
    <property type="entry name" value="Kunitz_BPTI"/>
</dbReference>
<dbReference type="InterPro" id="IPR036880">
    <property type="entry name" value="Kunitz_BPTI_sf"/>
</dbReference>
<dbReference type="InterPro" id="IPR020901">
    <property type="entry name" value="Prtase_inh_Kunz-CS"/>
</dbReference>
<dbReference type="InterPro" id="IPR050098">
    <property type="entry name" value="TFPI/VKTCI-like"/>
</dbReference>
<dbReference type="PANTHER" id="PTHR10083">
    <property type="entry name" value="KUNITZ-TYPE PROTEASE INHIBITOR-RELATED"/>
    <property type="match status" value="1"/>
</dbReference>
<dbReference type="Pfam" id="PF00014">
    <property type="entry name" value="Kunitz_BPTI"/>
    <property type="match status" value="1"/>
</dbReference>
<dbReference type="PRINTS" id="PR00759">
    <property type="entry name" value="BASICPTASE"/>
</dbReference>
<dbReference type="SMART" id="SM00131">
    <property type="entry name" value="KU"/>
    <property type="match status" value="1"/>
</dbReference>
<dbReference type="SUPFAM" id="SSF57362">
    <property type="entry name" value="BPTI-like"/>
    <property type="match status" value="1"/>
</dbReference>
<dbReference type="PROSITE" id="PS00280">
    <property type="entry name" value="BPTI_KUNITZ_1"/>
    <property type="match status" value="1"/>
</dbReference>
<dbReference type="PROSITE" id="PS50279">
    <property type="entry name" value="BPTI_KUNITZ_2"/>
    <property type="match status" value="1"/>
</dbReference>
<sequence>LQHRTFCKLPAEPGPCKASIPAFYYNWAAKKCQLFHYGGCKGNANRFSTIEKCRRACVG</sequence>
<keyword id="KW-0186">Copper</keyword>
<keyword id="KW-0903">Direct protein sequencing</keyword>
<keyword id="KW-1015">Disulfide bond</keyword>
<keyword id="KW-0646">Protease inhibitor</keyword>
<keyword id="KW-0964">Secreted</keyword>
<keyword id="KW-0722">Serine protease inhibitor</keyword>
<feature type="chain" id="PRO_0000016867" description="Kunitz-type serine protease inhibitor long epsilon-dendrotoxin Arg55">
    <location>
        <begin position="1"/>
        <end position="59"/>
    </location>
</feature>
<feature type="chain" id="PRO_0000016868" description="Kunitz-type serine protease inhibitor short epsilon-dendrotoxin Arg55">
    <location>
        <begin position="3"/>
        <end position="59"/>
    </location>
</feature>
<feature type="domain" description="BPTI/Kunitz inhibitor" evidence="3">
    <location>
        <begin position="7"/>
        <end position="57"/>
    </location>
</feature>
<feature type="site" description="Reactive bond for trypsin" evidence="1">
    <location>
        <begin position="17"/>
        <end position="18"/>
    </location>
</feature>
<feature type="disulfide bond" evidence="3">
    <location>
        <begin position="7"/>
        <end position="57"/>
    </location>
</feature>
<feature type="disulfide bond" evidence="3">
    <location>
        <begin position="16"/>
        <end position="40"/>
    </location>
</feature>
<feature type="disulfide bond" evidence="3">
    <location>
        <begin position="32"/>
        <end position="53"/>
    </location>
</feature>
<comment type="function">
    <text evidence="2">Serine protease inhibitor that inhibits trypsin.</text>
</comment>
<comment type="subcellular location">
    <subcellularLocation>
        <location evidence="4">Secreted</location>
    </subcellularLocation>
</comment>
<comment type="tissue specificity">
    <text evidence="7">Expressed by the venom gland.</text>
</comment>
<comment type="mass spectrometry">
    <molecule>Kunitz-type serine protease inhibitor long epsilon-dendrotoxin Arg55</molecule>
</comment>
<comment type="mass spectrometry">
    <molecule>Kunitz-type serine protease inhibitor short epsilon-dendrotoxin Arg55</molecule>
</comment>
<comment type="similarity">
    <text evidence="6">Belongs to the venom Kunitz-type family.</text>
</comment>
<accession>Q7LZS8</accession>
<organism>
    <name type="scientific">Dendroaspis angusticeps</name>
    <name type="common">Eastern green mamba</name>
    <name type="synonym">Naja angusticeps</name>
    <dbReference type="NCBI Taxonomy" id="8618"/>
    <lineage>
        <taxon>Eukaryota</taxon>
        <taxon>Metazoa</taxon>
        <taxon>Chordata</taxon>
        <taxon>Craniata</taxon>
        <taxon>Vertebrata</taxon>
        <taxon>Euteleostomi</taxon>
        <taxon>Lepidosauria</taxon>
        <taxon>Squamata</taxon>
        <taxon>Bifurcata</taxon>
        <taxon>Unidentata</taxon>
        <taxon>Episquamata</taxon>
        <taxon>Toxicofera</taxon>
        <taxon>Serpentes</taxon>
        <taxon>Colubroidea</taxon>
        <taxon>Elapidae</taxon>
        <taxon>Elapinae</taxon>
        <taxon>Dendroaspis</taxon>
    </lineage>
</organism>
<proteinExistence type="evidence at protein level"/>
<name>VKTRE_DENAN</name>